<gene>
    <name evidence="1" type="primary">acpP</name>
    <name type="ordered locus">HY04AAS1_0510</name>
</gene>
<evidence type="ECO:0000255" key="1">
    <source>
        <dbReference type="HAMAP-Rule" id="MF_01217"/>
    </source>
</evidence>
<evidence type="ECO:0000255" key="2">
    <source>
        <dbReference type="PROSITE-ProRule" id="PRU00258"/>
    </source>
</evidence>
<dbReference type="EMBL" id="CP001130">
    <property type="protein sequence ID" value="ACG57197.1"/>
    <property type="molecule type" value="Genomic_DNA"/>
</dbReference>
<dbReference type="RefSeq" id="WP_012513553.1">
    <property type="nucleotide sequence ID" value="NC_011126.1"/>
</dbReference>
<dbReference type="SMR" id="B4U7T6"/>
<dbReference type="STRING" id="380749.HY04AAS1_0510"/>
<dbReference type="KEGG" id="hya:HY04AAS1_0510"/>
<dbReference type="eggNOG" id="COG0236">
    <property type="taxonomic scope" value="Bacteria"/>
</dbReference>
<dbReference type="HOGENOM" id="CLU_108696_5_1_0"/>
<dbReference type="OrthoDB" id="9804551at2"/>
<dbReference type="UniPathway" id="UPA00094"/>
<dbReference type="GO" id="GO:0005829">
    <property type="term" value="C:cytosol"/>
    <property type="evidence" value="ECO:0007669"/>
    <property type="project" value="TreeGrafter"/>
</dbReference>
<dbReference type="GO" id="GO:0016020">
    <property type="term" value="C:membrane"/>
    <property type="evidence" value="ECO:0007669"/>
    <property type="project" value="GOC"/>
</dbReference>
<dbReference type="GO" id="GO:0000035">
    <property type="term" value="F:acyl binding"/>
    <property type="evidence" value="ECO:0007669"/>
    <property type="project" value="TreeGrafter"/>
</dbReference>
<dbReference type="GO" id="GO:0000036">
    <property type="term" value="F:acyl carrier activity"/>
    <property type="evidence" value="ECO:0007669"/>
    <property type="project" value="UniProtKB-UniRule"/>
</dbReference>
<dbReference type="GO" id="GO:0009245">
    <property type="term" value="P:lipid A biosynthetic process"/>
    <property type="evidence" value="ECO:0007669"/>
    <property type="project" value="TreeGrafter"/>
</dbReference>
<dbReference type="FunFam" id="1.10.1200.10:FF:000001">
    <property type="entry name" value="Acyl carrier protein"/>
    <property type="match status" value="1"/>
</dbReference>
<dbReference type="Gene3D" id="1.10.1200.10">
    <property type="entry name" value="ACP-like"/>
    <property type="match status" value="1"/>
</dbReference>
<dbReference type="HAMAP" id="MF_01217">
    <property type="entry name" value="Acyl_carrier"/>
    <property type="match status" value="1"/>
</dbReference>
<dbReference type="InterPro" id="IPR003231">
    <property type="entry name" value="ACP"/>
</dbReference>
<dbReference type="InterPro" id="IPR036736">
    <property type="entry name" value="ACP-like_sf"/>
</dbReference>
<dbReference type="InterPro" id="IPR009081">
    <property type="entry name" value="PP-bd_ACP"/>
</dbReference>
<dbReference type="InterPro" id="IPR006162">
    <property type="entry name" value="Ppantetheine_attach_site"/>
</dbReference>
<dbReference type="NCBIfam" id="TIGR00517">
    <property type="entry name" value="acyl_carrier"/>
    <property type="match status" value="1"/>
</dbReference>
<dbReference type="NCBIfam" id="NF002148">
    <property type="entry name" value="PRK00982.1-2"/>
    <property type="match status" value="1"/>
</dbReference>
<dbReference type="NCBIfam" id="NF002149">
    <property type="entry name" value="PRK00982.1-3"/>
    <property type="match status" value="1"/>
</dbReference>
<dbReference type="NCBIfam" id="NF002150">
    <property type="entry name" value="PRK00982.1-4"/>
    <property type="match status" value="1"/>
</dbReference>
<dbReference type="NCBIfam" id="NF002151">
    <property type="entry name" value="PRK00982.1-5"/>
    <property type="match status" value="1"/>
</dbReference>
<dbReference type="PANTHER" id="PTHR20863">
    <property type="entry name" value="ACYL CARRIER PROTEIN"/>
    <property type="match status" value="1"/>
</dbReference>
<dbReference type="PANTHER" id="PTHR20863:SF76">
    <property type="entry name" value="CARRIER DOMAIN-CONTAINING PROTEIN"/>
    <property type="match status" value="1"/>
</dbReference>
<dbReference type="Pfam" id="PF00550">
    <property type="entry name" value="PP-binding"/>
    <property type="match status" value="1"/>
</dbReference>
<dbReference type="SUPFAM" id="SSF47336">
    <property type="entry name" value="ACP-like"/>
    <property type="match status" value="1"/>
</dbReference>
<dbReference type="PROSITE" id="PS50075">
    <property type="entry name" value="CARRIER"/>
    <property type="match status" value="1"/>
</dbReference>
<dbReference type="PROSITE" id="PS00012">
    <property type="entry name" value="PHOSPHOPANTETHEINE"/>
    <property type="match status" value="1"/>
</dbReference>
<proteinExistence type="inferred from homology"/>
<name>ACP_HYDS0</name>
<protein>
    <recommendedName>
        <fullName evidence="1">Acyl carrier protein</fullName>
        <shortName evidence="1">ACP</shortName>
    </recommendedName>
</protein>
<keyword id="KW-0963">Cytoplasm</keyword>
<keyword id="KW-0275">Fatty acid biosynthesis</keyword>
<keyword id="KW-0276">Fatty acid metabolism</keyword>
<keyword id="KW-0444">Lipid biosynthesis</keyword>
<keyword id="KW-0443">Lipid metabolism</keyword>
<keyword id="KW-0596">Phosphopantetheine</keyword>
<keyword id="KW-0597">Phosphoprotein</keyword>
<comment type="function">
    <text evidence="1">Carrier of the growing fatty acid chain in fatty acid biosynthesis.</text>
</comment>
<comment type="pathway">
    <text evidence="1">Lipid metabolism; fatty acid biosynthesis.</text>
</comment>
<comment type="subcellular location">
    <subcellularLocation>
        <location evidence="1">Cytoplasm</location>
    </subcellularLocation>
</comment>
<comment type="PTM">
    <text evidence="1">4'-phosphopantetheine is transferred from CoA to a specific serine of apo-ACP by AcpS. This modification is essential for activity because fatty acids are bound in thioester linkage to the sulfhydryl of the prosthetic group.</text>
</comment>
<comment type="similarity">
    <text evidence="1">Belongs to the acyl carrier protein (ACP) family.</text>
</comment>
<organism>
    <name type="scientific">Hydrogenobaculum sp. (strain Y04AAS1)</name>
    <dbReference type="NCBI Taxonomy" id="380749"/>
    <lineage>
        <taxon>Bacteria</taxon>
        <taxon>Pseudomonadati</taxon>
        <taxon>Aquificota</taxon>
        <taxon>Aquificia</taxon>
        <taxon>Aquificales</taxon>
        <taxon>Aquificaceae</taxon>
        <taxon>Hydrogenobaculum</taxon>
    </lineage>
</organism>
<sequence>MDREQRIKEIIADQLGVEVDKLTPDAKFVEDLGADSLDVVELIMSFEEEFNIEIPDEDAEKIKTVGDVINYLNEKLK</sequence>
<reference key="1">
    <citation type="journal article" date="2009" name="J. Bacteriol.">
        <title>Complete and draft genome sequences of six members of the Aquificales.</title>
        <authorList>
            <person name="Reysenbach A.-L."/>
            <person name="Hamamura N."/>
            <person name="Podar M."/>
            <person name="Griffiths E."/>
            <person name="Ferreira S."/>
            <person name="Hochstein R."/>
            <person name="Heidelberg J."/>
            <person name="Johnson J."/>
            <person name="Mead D."/>
            <person name="Pohorille A."/>
            <person name="Sarmiento M."/>
            <person name="Schweighofer K."/>
            <person name="Seshadri R."/>
            <person name="Voytek M.A."/>
        </authorList>
    </citation>
    <scope>NUCLEOTIDE SEQUENCE [LARGE SCALE GENOMIC DNA]</scope>
    <source>
        <strain>Y04AAS1</strain>
    </source>
</reference>
<feature type="chain" id="PRO_1000139035" description="Acyl carrier protein">
    <location>
        <begin position="1"/>
        <end position="77"/>
    </location>
</feature>
<feature type="domain" description="Carrier" evidence="2">
    <location>
        <begin position="1"/>
        <end position="76"/>
    </location>
</feature>
<feature type="modified residue" description="O-(pantetheine 4'-phosphoryl)serine" evidence="2">
    <location>
        <position position="36"/>
    </location>
</feature>
<accession>B4U7T6</accession>